<evidence type="ECO:0000250" key="1">
    <source>
        <dbReference type="UniProtKB" id="O08349"/>
    </source>
</evidence>
<evidence type="ECO:0000250" key="2">
    <source>
        <dbReference type="UniProtKB" id="P61889"/>
    </source>
</evidence>
<evidence type="ECO:0000305" key="3"/>
<dbReference type="EC" id="1.1.1.37" evidence="1"/>
<dbReference type="EMBL" id="CP000561">
    <property type="protein sequence ID" value="ABO09116.1"/>
    <property type="molecule type" value="Genomic_DNA"/>
</dbReference>
<dbReference type="RefSeq" id="WP_011850375.1">
    <property type="nucleotide sequence ID" value="NC_009073.1"/>
</dbReference>
<dbReference type="SMR" id="A3MWU9"/>
<dbReference type="STRING" id="410359.Pcal_1699"/>
<dbReference type="GeneID" id="4909393"/>
<dbReference type="KEGG" id="pcl:Pcal_1699"/>
<dbReference type="eggNOG" id="arCOG00246">
    <property type="taxonomic scope" value="Archaea"/>
</dbReference>
<dbReference type="HOGENOM" id="CLU_045401_2_1_2"/>
<dbReference type="OrthoDB" id="2596at2157"/>
<dbReference type="BRENDA" id="1.1.1.37">
    <property type="organism ID" value="7282"/>
</dbReference>
<dbReference type="Proteomes" id="UP000001431">
    <property type="component" value="Chromosome"/>
</dbReference>
<dbReference type="GO" id="GO:0004459">
    <property type="term" value="F:L-lactate dehydrogenase activity"/>
    <property type="evidence" value="ECO:0007669"/>
    <property type="project" value="TreeGrafter"/>
</dbReference>
<dbReference type="GO" id="GO:0030060">
    <property type="term" value="F:L-malate dehydrogenase (NAD+) activity"/>
    <property type="evidence" value="ECO:0007669"/>
    <property type="project" value="UniProtKB-EC"/>
</dbReference>
<dbReference type="GO" id="GO:0006089">
    <property type="term" value="P:lactate metabolic process"/>
    <property type="evidence" value="ECO:0007669"/>
    <property type="project" value="TreeGrafter"/>
</dbReference>
<dbReference type="GO" id="GO:0006099">
    <property type="term" value="P:tricarboxylic acid cycle"/>
    <property type="evidence" value="ECO:0007669"/>
    <property type="project" value="UniProtKB-KW"/>
</dbReference>
<dbReference type="CDD" id="cd01339">
    <property type="entry name" value="LDH-like_MDH"/>
    <property type="match status" value="1"/>
</dbReference>
<dbReference type="FunFam" id="3.40.50.720:FF:000018">
    <property type="entry name" value="Malate dehydrogenase"/>
    <property type="match status" value="1"/>
</dbReference>
<dbReference type="Gene3D" id="3.90.110.10">
    <property type="entry name" value="Lactate dehydrogenase/glycoside hydrolase, family 4, C-terminal"/>
    <property type="match status" value="1"/>
</dbReference>
<dbReference type="Gene3D" id="3.40.50.720">
    <property type="entry name" value="NAD(P)-binding Rossmann-like Domain"/>
    <property type="match status" value="1"/>
</dbReference>
<dbReference type="InterPro" id="IPR001557">
    <property type="entry name" value="L-lactate/malate_DH"/>
</dbReference>
<dbReference type="InterPro" id="IPR022383">
    <property type="entry name" value="Lactate/malate_DH_C"/>
</dbReference>
<dbReference type="InterPro" id="IPR001236">
    <property type="entry name" value="Lactate/malate_DH_N"/>
</dbReference>
<dbReference type="InterPro" id="IPR015955">
    <property type="entry name" value="Lactate_DH/Glyco_Ohase_4_C"/>
</dbReference>
<dbReference type="InterPro" id="IPR011275">
    <property type="entry name" value="Malate_DH_type3"/>
</dbReference>
<dbReference type="InterPro" id="IPR036291">
    <property type="entry name" value="NAD(P)-bd_dom_sf"/>
</dbReference>
<dbReference type="NCBIfam" id="NF004863">
    <property type="entry name" value="PRK06223.1"/>
    <property type="match status" value="1"/>
</dbReference>
<dbReference type="PANTHER" id="PTHR43128">
    <property type="entry name" value="L-2-HYDROXYCARBOXYLATE DEHYDROGENASE (NAD(P)(+))"/>
    <property type="match status" value="1"/>
</dbReference>
<dbReference type="PANTHER" id="PTHR43128:SF16">
    <property type="entry name" value="L-LACTATE DEHYDROGENASE"/>
    <property type="match status" value="1"/>
</dbReference>
<dbReference type="Pfam" id="PF02866">
    <property type="entry name" value="Ldh_1_C"/>
    <property type="match status" value="1"/>
</dbReference>
<dbReference type="Pfam" id="PF00056">
    <property type="entry name" value="Ldh_1_N"/>
    <property type="match status" value="1"/>
</dbReference>
<dbReference type="PIRSF" id="PIRSF000102">
    <property type="entry name" value="Lac_mal_DH"/>
    <property type="match status" value="1"/>
</dbReference>
<dbReference type="PRINTS" id="PR00086">
    <property type="entry name" value="LLDHDRGNASE"/>
</dbReference>
<dbReference type="SUPFAM" id="SSF56327">
    <property type="entry name" value="LDH C-terminal domain-like"/>
    <property type="match status" value="1"/>
</dbReference>
<dbReference type="SUPFAM" id="SSF51735">
    <property type="entry name" value="NAD(P)-binding Rossmann-fold domains"/>
    <property type="match status" value="1"/>
</dbReference>
<proteinExistence type="inferred from homology"/>
<sequence length="309" mass="33293">MITIVGSGRVGTAAAAIMGIMRIDKKILLIDIVKGLPQGEALDLNHMSAILGLDVEYEGSNDYKDMAGSDLVIVTAGFPRKPGMTREQLVETNAKIVSDIGKEIKKYAPDSVVILTTNPLDAMTYVMWKSTGFPRERVIGFSGVLDAGRLAYYAAKKLGISPASILPIVLGQHGESMFPVPSKSFVHGVPLSKLLSEDQLREVVEETVKAGAKITELRGFSSNWGPGAGLAIMADSVKRDARRSLIASVVLKGEYGVFDLPVEVPIVLGKTGVVKVLEIELTPEEKEKFNQSVEAIRKLVGTIPQSYLQ</sequence>
<feature type="chain" id="PRO_1000026483" description="Malate dehydrogenase">
    <location>
        <begin position="1"/>
        <end position="309"/>
    </location>
</feature>
<feature type="active site" description="Proton acceptor" evidence="2">
    <location>
        <position position="173"/>
    </location>
</feature>
<feature type="binding site" evidence="1">
    <location>
        <begin position="6"/>
        <end position="11"/>
    </location>
    <ligand>
        <name>NAD(+)</name>
        <dbReference type="ChEBI" id="CHEBI:57540"/>
    </ligand>
</feature>
<feature type="binding site" evidence="1">
    <location>
        <position position="31"/>
    </location>
    <ligand>
        <name>NAD(+)</name>
        <dbReference type="ChEBI" id="CHEBI:57540"/>
    </ligand>
</feature>
<feature type="binding site" evidence="2">
    <location>
        <position position="80"/>
    </location>
    <ligand>
        <name>substrate</name>
    </ligand>
</feature>
<feature type="binding site" evidence="2">
    <location>
        <position position="86"/>
    </location>
    <ligand>
        <name>substrate</name>
    </ligand>
</feature>
<feature type="binding site" evidence="1">
    <location>
        <position position="93"/>
    </location>
    <ligand>
        <name>NAD(+)</name>
        <dbReference type="ChEBI" id="CHEBI:57540"/>
    </ligand>
</feature>
<feature type="binding site" evidence="1">
    <location>
        <begin position="116"/>
        <end position="118"/>
    </location>
    <ligand>
        <name>NAD(+)</name>
        <dbReference type="ChEBI" id="CHEBI:57540"/>
    </ligand>
</feature>
<feature type="binding site" evidence="2">
    <location>
        <position position="118"/>
    </location>
    <ligand>
        <name>substrate</name>
    </ligand>
</feature>
<feature type="binding site" evidence="2">
    <location>
        <position position="149"/>
    </location>
    <ligand>
        <name>substrate</name>
    </ligand>
</feature>
<organism>
    <name type="scientific">Pyrobaculum calidifontis (strain DSM 21063 / JCM 11548 / VA1)</name>
    <dbReference type="NCBI Taxonomy" id="410359"/>
    <lineage>
        <taxon>Archaea</taxon>
        <taxon>Thermoproteota</taxon>
        <taxon>Thermoprotei</taxon>
        <taxon>Thermoproteales</taxon>
        <taxon>Thermoproteaceae</taxon>
        <taxon>Pyrobaculum</taxon>
    </lineage>
</organism>
<reference key="1">
    <citation type="submission" date="2007-02" db="EMBL/GenBank/DDBJ databases">
        <title>Complete sequence of Pyrobaculum calidifontis JCM 11548.</title>
        <authorList>
            <consortium name="US DOE Joint Genome Institute"/>
            <person name="Copeland A."/>
            <person name="Lucas S."/>
            <person name="Lapidus A."/>
            <person name="Barry K."/>
            <person name="Glavina del Rio T."/>
            <person name="Dalin E."/>
            <person name="Tice H."/>
            <person name="Pitluck S."/>
            <person name="Chain P."/>
            <person name="Malfatti S."/>
            <person name="Shin M."/>
            <person name="Vergez L."/>
            <person name="Schmutz J."/>
            <person name="Larimer F."/>
            <person name="Land M."/>
            <person name="Hauser L."/>
            <person name="Kyrpides N."/>
            <person name="Mikhailova N."/>
            <person name="Cozen A.E."/>
            <person name="Fitz-Gibbon S.T."/>
            <person name="House C.H."/>
            <person name="Saltikov C."/>
            <person name="Lowe T.M."/>
            <person name="Richardson P."/>
        </authorList>
    </citation>
    <scope>NUCLEOTIDE SEQUENCE [LARGE SCALE GENOMIC DNA]</scope>
    <source>
        <strain>DSM 21063 / JCM 11548 / VA1</strain>
    </source>
</reference>
<keyword id="KW-0520">NAD</keyword>
<keyword id="KW-0560">Oxidoreductase</keyword>
<keyword id="KW-0816">Tricarboxylic acid cycle</keyword>
<accession>A3MWU9</accession>
<protein>
    <recommendedName>
        <fullName evidence="1">Malate dehydrogenase</fullName>
        <ecNumber evidence="1">1.1.1.37</ecNumber>
    </recommendedName>
</protein>
<gene>
    <name type="primary">mdh</name>
    <name type="ordered locus">Pcal_1699</name>
</gene>
<name>MDH_PYRCJ</name>
<comment type="function">
    <text evidence="1">Catalyzes the reversible oxidation of malate to oxaloacetate.</text>
</comment>
<comment type="catalytic activity">
    <reaction evidence="1">
        <text>(S)-malate + NAD(+) = oxaloacetate + NADH + H(+)</text>
        <dbReference type="Rhea" id="RHEA:21432"/>
        <dbReference type="ChEBI" id="CHEBI:15378"/>
        <dbReference type="ChEBI" id="CHEBI:15589"/>
        <dbReference type="ChEBI" id="CHEBI:16452"/>
        <dbReference type="ChEBI" id="CHEBI:57540"/>
        <dbReference type="ChEBI" id="CHEBI:57945"/>
        <dbReference type="EC" id="1.1.1.37"/>
    </reaction>
</comment>
<comment type="similarity">
    <text evidence="3">Belongs to the LDH/MDH superfamily.</text>
</comment>